<organismHost>
    <name type="scientific">Cercopithecidae</name>
    <name type="common">Old World monkeys</name>
    <dbReference type="NCBI Taxonomy" id="9527"/>
</organismHost>
<protein>
    <recommendedName>
        <fullName>Protein Nef</fullName>
    </recommendedName>
    <alternativeName>
        <fullName>3'ORF</fullName>
    </alternativeName>
    <alternativeName>
        <fullName>Negative factor</fullName>
        <shortName>F-protein</shortName>
    </alternativeName>
</protein>
<sequence length="229" mass="26655">MGSQNSKPAHKKYSKLWQALHKTHVTRYGLLADPLIGTSSTVQEECDKALRKSLIRKQNGNMTEEERRLQEGDTWEEWSDDEEEVGFPVRPRVPLRQMTYKLAVDFSHFLKEKGGLDGIYYSDRRNKILNLYALNEWGIIDDWNAWSKGPGIRFPKCFGFCFKLVPVDLHEEAQTCERHCLVHPAQMGEDPDGISHGEILVWKFDPMLAIQYDPNREYFTDMHGLVKRK</sequence>
<reference key="1">
    <citation type="journal article" date="1988" name="Nature">
        <title>Sequence of simian immunodeficiency virus from African green monkey, a new member of the HIV/SIV group.</title>
        <authorList>
            <person name="Fukasawa M."/>
            <person name="Miura T."/>
            <person name="Hasegawa A."/>
            <person name="Morikawa S."/>
            <person name="Tsujimoto H."/>
            <person name="Miki K."/>
            <person name="Kitamura T."/>
            <person name="Hayami M."/>
        </authorList>
    </citation>
    <scope>NUCLEOTIDE SEQUENCE [GENOMIC DNA]</scope>
</reference>
<name>NEF_SIVVT</name>
<gene>
    <name type="primary">nef</name>
</gene>
<proteinExistence type="inferred from homology"/>
<dbReference type="EMBL" id="X07805">
    <property type="protein sequence ID" value="CAA30664.1"/>
    <property type="molecule type" value="Genomic_DNA"/>
</dbReference>
<dbReference type="SMR" id="P05863"/>
<dbReference type="GO" id="GO:0020002">
    <property type="term" value="C:host cell plasma membrane"/>
    <property type="evidence" value="ECO:0007669"/>
    <property type="project" value="UniProtKB-SubCell"/>
</dbReference>
<dbReference type="GO" id="GO:0016020">
    <property type="term" value="C:membrane"/>
    <property type="evidence" value="ECO:0007669"/>
    <property type="project" value="UniProtKB-KW"/>
</dbReference>
<dbReference type="GO" id="GO:0005525">
    <property type="term" value="F:GTP binding"/>
    <property type="evidence" value="ECO:0007669"/>
    <property type="project" value="InterPro"/>
</dbReference>
<dbReference type="Gene3D" id="3.30.62.10">
    <property type="entry name" value="Nef Regulatory Factor"/>
    <property type="match status" value="1"/>
</dbReference>
<dbReference type="InterPro" id="IPR027481">
    <property type="entry name" value="HIV-1_Nef_core_sf"/>
</dbReference>
<dbReference type="InterPro" id="IPR001558">
    <property type="entry name" value="HIV_Nef"/>
</dbReference>
<dbReference type="Pfam" id="PF00469">
    <property type="entry name" value="F-protein"/>
    <property type="match status" value="1"/>
</dbReference>
<dbReference type="SUPFAM" id="SSF55671">
    <property type="entry name" value="Regulatory factor Nef"/>
    <property type="match status" value="1"/>
</dbReference>
<comment type="function">
    <text evidence="1">Seems to play a role in optimizing the host cell environment for viral replication without causing cell death by apoptosis. Enhances virus infectivity and pathogenicity. Probably involved in viral immune evasion mechanisms (By similarity).</text>
</comment>
<comment type="function">
    <text evidence="1">In infected CD4(+) T-lymphocytes, down-regulates cell surface expression of CD4, CD28, CD3, and MHC-I or MHC-II molecules.</text>
</comment>
<comment type="function">
    <text evidence="1">Interferes with TCR signaling from the cell membrane. Interacts with CD247/TCRZ (TCR zeta chain) and exert potent down-regulation of cell surface TCR/CD3 complexes (By similarity).</text>
</comment>
<comment type="subunit">
    <text evidence="1">Homodimer. Interacts with host CD247/TCRZ; this interaction induces down-regulation of cell surface TCR/CD3 complexes.</text>
</comment>
<comment type="subcellular location">
    <subcellularLocation>
        <location evidence="1">Host cell membrane</location>
        <topology evidence="1">Lipid-anchor</topology>
        <orientation evidence="1">Cytoplasmic side</orientation>
    </subcellularLocation>
    <text evidence="1">Associates with the inner plasma membrane through its N-terminal domain.</text>
</comment>
<comment type="domain">
    <text evidence="1">The N-terminal domain is composed of the N-myristoyl glycine and of a cluster of positively charged amino acids. It is required for inner plasma membrane targeting of Nef (By similarity).</text>
</comment>
<comment type="miscellaneous">
    <text>This is an African green monkey isolate.</text>
</comment>
<comment type="similarity">
    <text evidence="2">Belongs to the lentivirus primate group Nef protein family.</text>
</comment>
<accession>P05863</accession>
<organism>
    <name type="scientific">Simian immunodeficiency virus agm.vervet (isolate AGM TYO-1)</name>
    <name type="common">SIV-agm.ver</name>
    <name type="synonym">Simian immunodeficiency virus African green monkey vervet</name>
    <dbReference type="NCBI Taxonomy" id="11731"/>
    <lineage>
        <taxon>Viruses</taxon>
        <taxon>Riboviria</taxon>
        <taxon>Pararnavirae</taxon>
        <taxon>Artverviricota</taxon>
        <taxon>Revtraviricetes</taxon>
        <taxon>Ortervirales</taxon>
        <taxon>Retroviridae</taxon>
        <taxon>Orthoretrovirinae</taxon>
        <taxon>Lentivirus</taxon>
        <taxon>Simian immunodeficiency virus</taxon>
    </lineage>
</organism>
<feature type="initiator methionine" description="Removed; by host" evidence="1">
    <location>
        <position position="1"/>
    </location>
</feature>
<feature type="chain" id="PRO_0000085242" description="Protein Nef">
    <location>
        <begin position="2"/>
        <end position="229"/>
    </location>
</feature>
<feature type="region of interest" description="Acidic">
    <location>
        <begin position="76"/>
        <end position="84"/>
    </location>
</feature>
<feature type="region of interest" description="Mediates dimerization" evidence="1">
    <location>
        <begin position="127"/>
        <end position="143"/>
    </location>
</feature>
<feature type="lipid moiety-binding region" description="N-myristoyl glycine; by host" evidence="1">
    <location>
        <position position="2"/>
    </location>
</feature>
<evidence type="ECO:0000250" key="1"/>
<evidence type="ECO:0000305" key="2"/>
<keyword id="KW-1032">Host cell membrane</keyword>
<keyword id="KW-1043">Host membrane</keyword>
<keyword id="KW-0945">Host-virus interaction</keyword>
<keyword id="KW-0449">Lipoprotein</keyword>
<keyword id="KW-0472">Membrane</keyword>
<keyword id="KW-0519">Myristate</keyword>
<keyword id="KW-0899">Viral immunoevasion</keyword>
<keyword id="KW-0843">Virulence</keyword>